<evidence type="ECO:0000255" key="1">
    <source>
        <dbReference type="HAMAP-Rule" id="MF_00664"/>
    </source>
</evidence>
<sequence length="217" mass="24059">MNYPHPLIAREGWPFLAGAFLISLLVHASAGFWWALPLWIITLFVLQFFRDPPRPIPAQPNAVLAPADGRIVVVEKVQDPYAGREALKISVFMNVFNVHSNRASVDGKVEKLEYFPGKFVNADLDKASVENERNAVVIRRAADGQIVTLVQVAGLVARRILCYTKVGDSLSRGQRYGFIRFGSRVDVYLPVSARPRVTIGEKVSASSTILAELDEVK</sequence>
<name>PSD_CUPPJ</name>
<proteinExistence type="inferred from homology"/>
<organism>
    <name type="scientific">Cupriavidus pinatubonensis (strain JMP 134 / LMG 1197)</name>
    <name type="common">Cupriavidus necator (strain JMP 134)</name>
    <dbReference type="NCBI Taxonomy" id="264198"/>
    <lineage>
        <taxon>Bacteria</taxon>
        <taxon>Pseudomonadati</taxon>
        <taxon>Pseudomonadota</taxon>
        <taxon>Betaproteobacteria</taxon>
        <taxon>Burkholderiales</taxon>
        <taxon>Burkholderiaceae</taxon>
        <taxon>Cupriavidus</taxon>
    </lineage>
</organism>
<comment type="function">
    <text evidence="1">Catalyzes the formation of phosphatidylethanolamine (PtdEtn) from phosphatidylserine (PtdSer).</text>
</comment>
<comment type="catalytic activity">
    <reaction evidence="1">
        <text>a 1,2-diacyl-sn-glycero-3-phospho-L-serine + H(+) = a 1,2-diacyl-sn-glycero-3-phosphoethanolamine + CO2</text>
        <dbReference type="Rhea" id="RHEA:20828"/>
        <dbReference type="ChEBI" id="CHEBI:15378"/>
        <dbReference type="ChEBI" id="CHEBI:16526"/>
        <dbReference type="ChEBI" id="CHEBI:57262"/>
        <dbReference type="ChEBI" id="CHEBI:64612"/>
        <dbReference type="EC" id="4.1.1.65"/>
    </reaction>
</comment>
<comment type="cofactor">
    <cofactor evidence="1">
        <name>pyruvate</name>
        <dbReference type="ChEBI" id="CHEBI:15361"/>
    </cofactor>
    <text evidence="1">Binds 1 pyruvoyl group covalently per subunit.</text>
</comment>
<comment type="pathway">
    <text evidence="1">Phospholipid metabolism; phosphatidylethanolamine biosynthesis; phosphatidylethanolamine from CDP-diacylglycerol: step 2/2.</text>
</comment>
<comment type="subunit">
    <text evidence="1">Heterodimer of a large membrane-associated beta subunit and a small pyruvoyl-containing alpha subunit.</text>
</comment>
<comment type="subcellular location">
    <subcellularLocation>
        <location evidence="1">Cell membrane</location>
        <topology evidence="1">Peripheral membrane protein</topology>
    </subcellularLocation>
</comment>
<comment type="PTM">
    <text evidence="1">Is synthesized initially as an inactive proenzyme. Formation of the active enzyme involves a self-maturation process in which the active site pyruvoyl group is generated from an internal serine residue via an autocatalytic post-translational modification. Two non-identical subunits are generated from the proenzyme in this reaction, and the pyruvate is formed at the N-terminus of the alpha chain, which is derived from the carboxyl end of the proenzyme. The post-translation cleavage follows an unusual pathway, termed non-hydrolytic serinolysis, in which the side chain hydroxyl group of the serine supplies its oxygen atom to form the C-terminus of the beta chain, while the remainder of the serine residue undergoes an oxidative deamination to produce ammonia and the pyruvoyl prosthetic group on the alpha chain.</text>
</comment>
<comment type="similarity">
    <text evidence="1">Belongs to the phosphatidylserine decarboxylase family. PSD-A subfamily.</text>
</comment>
<protein>
    <recommendedName>
        <fullName evidence="1">Phosphatidylserine decarboxylase proenzyme</fullName>
        <ecNumber evidence="1">4.1.1.65</ecNumber>
    </recommendedName>
    <component>
        <recommendedName>
            <fullName evidence="1">Phosphatidylserine decarboxylase alpha chain</fullName>
        </recommendedName>
    </component>
    <component>
        <recommendedName>
            <fullName evidence="1">Phosphatidylserine decarboxylase beta chain</fullName>
        </recommendedName>
    </component>
</protein>
<feature type="chain" id="PRO_0000262245" description="Phosphatidylserine decarboxylase beta chain" evidence="1">
    <location>
        <begin position="1"/>
        <end position="182"/>
    </location>
</feature>
<feature type="chain" id="PRO_0000262246" description="Phosphatidylserine decarboxylase alpha chain" evidence="1">
    <location>
        <begin position="183"/>
        <end position="217"/>
    </location>
</feature>
<feature type="active site" description="Schiff-base intermediate with substrate; via pyruvic acid" evidence="1">
    <location>
        <position position="183"/>
    </location>
</feature>
<feature type="site" description="Cleavage (non-hydrolytic); by autocatalysis" evidence="1">
    <location>
        <begin position="182"/>
        <end position="183"/>
    </location>
</feature>
<feature type="modified residue" description="Pyruvic acid (Ser); by autocatalysis" evidence="1">
    <location>
        <position position="183"/>
    </location>
</feature>
<reference key="1">
    <citation type="journal article" date="2010" name="PLoS ONE">
        <title>The complete multipartite genome sequence of Cupriavidus necator JMP134, a versatile pollutant degrader.</title>
        <authorList>
            <person name="Lykidis A."/>
            <person name="Perez-Pantoja D."/>
            <person name="Ledger T."/>
            <person name="Mavromatis K."/>
            <person name="Anderson I.J."/>
            <person name="Ivanova N.N."/>
            <person name="Hooper S.D."/>
            <person name="Lapidus A."/>
            <person name="Lucas S."/>
            <person name="Gonzalez B."/>
            <person name="Kyrpides N.C."/>
        </authorList>
    </citation>
    <scope>NUCLEOTIDE SEQUENCE [LARGE SCALE GENOMIC DNA]</scope>
    <source>
        <strain>JMP134 / LMG 1197</strain>
    </source>
</reference>
<gene>
    <name evidence="1" type="primary">psd</name>
    <name type="ordered locus">Reut_A0950</name>
</gene>
<accession>Q473V4</accession>
<keyword id="KW-1003">Cell membrane</keyword>
<keyword id="KW-0210">Decarboxylase</keyword>
<keyword id="KW-0444">Lipid biosynthesis</keyword>
<keyword id="KW-0443">Lipid metabolism</keyword>
<keyword id="KW-0456">Lyase</keyword>
<keyword id="KW-0472">Membrane</keyword>
<keyword id="KW-0594">Phospholipid biosynthesis</keyword>
<keyword id="KW-1208">Phospholipid metabolism</keyword>
<keyword id="KW-0670">Pyruvate</keyword>
<keyword id="KW-0865">Zymogen</keyword>
<dbReference type="EC" id="4.1.1.65" evidence="1"/>
<dbReference type="EMBL" id="CP000090">
    <property type="protein sequence ID" value="AAZ60329.1"/>
    <property type="molecule type" value="Genomic_DNA"/>
</dbReference>
<dbReference type="SMR" id="Q473V4"/>
<dbReference type="STRING" id="264198.Reut_A0950"/>
<dbReference type="KEGG" id="reu:Reut_A0950"/>
<dbReference type="eggNOG" id="COG0688">
    <property type="taxonomic scope" value="Bacteria"/>
</dbReference>
<dbReference type="HOGENOM" id="CLU_072492_0_0_4"/>
<dbReference type="OrthoDB" id="9790893at2"/>
<dbReference type="UniPathway" id="UPA00558">
    <property type="reaction ID" value="UER00616"/>
</dbReference>
<dbReference type="GO" id="GO:0005886">
    <property type="term" value="C:plasma membrane"/>
    <property type="evidence" value="ECO:0007669"/>
    <property type="project" value="UniProtKB-SubCell"/>
</dbReference>
<dbReference type="GO" id="GO:0004609">
    <property type="term" value="F:phosphatidylserine decarboxylase activity"/>
    <property type="evidence" value="ECO:0007669"/>
    <property type="project" value="UniProtKB-UniRule"/>
</dbReference>
<dbReference type="GO" id="GO:0006646">
    <property type="term" value="P:phosphatidylethanolamine biosynthetic process"/>
    <property type="evidence" value="ECO:0007669"/>
    <property type="project" value="UniProtKB-UniRule"/>
</dbReference>
<dbReference type="HAMAP" id="MF_00664">
    <property type="entry name" value="PS_decarb_PSD_A"/>
    <property type="match status" value="1"/>
</dbReference>
<dbReference type="InterPro" id="IPR003817">
    <property type="entry name" value="PS_Dcarbxylase"/>
</dbReference>
<dbReference type="InterPro" id="IPR033175">
    <property type="entry name" value="PSD-A"/>
</dbReference>
<dbReference type="NCBIfam" id="TIGR00164">
    <property type="entry name" value="AS_decarb"/>
    <property type="match status" value="1"/>
</dbReference>
<dbReference type="NCBIfam" id="NF003678">
    <property type="entry name" value="PRK05305.1-2"/>
    <property type="match status" value="1"/>
</dbReference>
<dbReference type="NCBIfam" id="NF003680">
    <property type="entry name" value="PRK05305.1-5"/>
    <property type="match status" value="1"/>
</dbReference>
<dbReference type="PANTHER" id="PTHR35809">
    <property type="entry name" value="ARCHAETIDYLSERINE DECARBOXYLASE PROENZYME-RELATED"/>
    <property type="match status" value="1"/>
</dbReference>
<dbReference type="PANTHER" id="PTHR35809:SF1">
    <property type="entry name" value="ARCHAETIDYLSERINE DECARBOXYLASE PROENZYME-RELATED"/>
    <property type="match status" value="1"/>
</dbReference>
<dbReference type="Pfam" id="PF02666">
    <property type="entry name" value="PS_Dcarbxylase"/>
    <property type="match status" value="1"/>
</dbReference>